<organism>
    <name type="scientific">Roseobacter denitrificans (strain ATCC 33942 / OCh 114)</name>
    <name type="common">Erythrobacter sp. (strain OCh 114)</name>
    <name type="synonym">Roseobacter denitrificans</name>
    <dbReference type="NCBI Taxonomy" id="375451"/>
    <lineage>
        <taxon>Bacteria</taxon>
        <taxon>Pseudomonadati</taxon>
        <taxon>Pseudomonadota</taxon>
        <taxon>Alphaproteobacteria</taxon>
        <taxon>Rhodobacterales</taxon>
        <taxon>Roseobacteraceae</taxon>
        <taxon>Roseobacter</taxon>
    </lineage>
</organism>
<name>COXX_ROSDO</name>
<feature type="chain" id="PRO_0000327146" description="Protoheme IX farnesyltransferase">
    <location>
        <begin position="1"/>
        <end position="314"/>
    </location>
</feature>
<feature type="transmembrane region" description="Helical" evidence="1">
    <location>
        <begin position="30"/>
        <end position="50"/>
    </location>
</feature>
<feature type="transmembrane region" description="Helical" evidence="1">
    <location>
        <begin position="51"/>
        <end position="71"/>
    </location>
</feature>
<feature type="transmembrane region" description="Helical" evidence="1">
    <location>
        <begin position="122"/>
        <end position="142"/>
    </location>
</feature>
<feature type="transmembrane region" description="Helical" evidence="1">
    <location>
        <begin position="151"/>
        <end position="171"/>
    </location>
</feature>
<feature type="transmembrane region" description="Helical" evidence="1">
    <location>
        <begin position="178"/>
        <end position="198"/>
    </location>
</feature>
<feature type="transmembrane region" description="Helical" evidence="1">
    <location>
        <begin position="224"/>
        <end position="244"/>
    </location>
</feature>
<feature type="transmembrane region" description="Helical" evidence="1">
    <location>
        <begin position="247"/>
        <end position="267"/>
    </location>
</feature>
<feature type="transmembrane region" description="Helical" evidence="1">
    <location>
        <begin position="285"/>
        <end position="305"/>
    </location>
</feature>
<accession>Q167W1</accession>
<comment type="function">
    <text evidence="1">Converts heme B (protoheme IX) to heme O by substitution of the vinyl group on carbon 2 of heme B porphyrin ring with a hydroxyethyl farnesyl side group.</text>
</comment>
<comment type="catalytic activity">
    <reaction evidence="1">
        <text>heme b + (2E,6E)-farnesyl diphosphate + H2O = Fe(II)-heme o + diphosphate</text>
        <dbReference type="Rhea" id="RHEA:28070"/>
        <dbReference type="ChEBI" id="CHEBI:15377"/>
        <dbReference type="ChEBI" id="CHEBI:33019"/>
        <dbReference type="ChEBI" id="CHEBI:60344"/>
        <dbReference type="ChEBI" id="CHEBI:60530"/>
        <dbReference type="ChEBI" id="CHEBI:175763"/>
        <dbReference type="EC" id="2.5.1.141"/>
    </reaction>
</comment>
<comment type="pathway">
    <text evidence="1">Porphyrin-containing compound metabolism; heme O biosynthesis; heme O from protoheme: step 1/1.</text>
</comment>
<comment type="subunit">
    <text evidence="1">Interacts with CtaA.</text>
</comment>
<comment type="subcellular location">
    <subcellularLocation>
        <location evidence="1">Cell inner membrane</location>
        <topology evidence="1">Multi-pass membrane protein</topology>
    </subcellularLocation>
</comment>
<comment type="miscellaneous">
    <text evidence="1">Carbon 2 of the heme B porphyrin ring is defined according to the Fischer nomenclature.</text>
</comment>
<comment type="similarity">
    <text evidence="1">Belongs to the UbiA prenyltransferase family. Protoheme IX farnesyltransferase subfamily.</text>
</comment>
<protein>
    <recommendedName>
        <fullName evidence="1">Protoheme IX farnesyltransferase</fullName>
        <ecNumber evidence="1">2.5.1.141</ecNumber>
    </recommendedName>
    <alternativeName>
        <fullName evidence="1">Heme B farnesyltransferase</fullName>
    </alternativeName>
    <alternativeName>
        <fullName evidence="1">Heme O synthase</fullName>
    </alternativeName>
</protein>
<gene>
    <name evidence="1" type="primary">ctaB</name>
    <name type="ordered locus">RD1_2136</name>
</gene>
<dbReference type="EC" id="2.5.1.141" evidence="1"/>
<dbReference type="EMBL" id="CP000362">
    <property type="protein sequence ID" value="ABG31732.1"/>
    <property type="molecule type" value="Genomic_DNA"/>
</dbReference>
<dbReference type="RefSeq" id="WP_011568349.1">
    <property type="nucleotide sequence ID" value="NC_008209.1"/>
</dbReference>
<dbReference type="SMR" id="Q167W1"/>
<dbReference type="STRING" id="375451.RD1_2136"/>
<dbReference type="KEGG" id="rde:RD1_2136"/>
<dbReference type="eggNOG" id="COG0109">
    <property type="taxonomic scope" value="Bacteria"/>
</dbReference>
<dbReference type="HOGENOM" id="CLU_029631_0_2_5"/>
<dbReference type="OrthoDB" id="9814417at2"/>
<dbReference type="UniPathway" id="UPA00834">
    <property type="reaction ID" value="UER00712"/>
</dbReference>
<dbReference type="Proteomes" id="UP000007029">
    <property type="component" value="Chromosome"/>
</dbReference>
<dbReference type="GO" id="GO:0005886">
    <property type="term" value="C:plasma membrane"/>
    <property type="evidence" value="ECO:0007669"/>
    <property type="project" value="UniProtKB-SubCell"/>
</dbReference>
<dbReference type="GO" id="GO:0008495">
    <property type="term" value="F:protoheme IX farnesyltransferase activity"/>
    <property type="evidence" value="ECO:0007669"/>
    <property type="project" value="UniProtKB-UniRule"/>
</dbReference>
<dbReference type="GO" id="GO:0048034">
    <property type="term" value="P:heme O biosynthetic process"/>
    <property type="evidence" value="ECO:0007669"/>
    <property type="project" value="UniProtKB-UniRule"/>
</dbReference>
<dbReference type="CDD" id="cd13957">
    <property type="entry name" value="PT_UbiA_Cox10"/>
    <property type="match status" value="1"/>
</dbReference>
<dbReference type="Gene3D" id="1.10.357.140">
    <property type="entry name" value="UbiA prenyltransferase"/>
    <property type="match status" value="1"/>
</dbReference>
<dbReference type="HAMAP" id="MF_00154">
    <property type="entry name" value="CyoE_CtaB"/>
    <property type="match status" value="1"/>
</dbReference>
<dbReference type="InterPro" id="IPR006369">
    <property type="entry name" value="Protohaem_IX_farnesylTrfase"/>
</dbReference>
<dbReference type="InterPro" id="IPR000537">
    <property type="entry name" value="UbiA_prenyltransferase"/>
</dbReference>
<dbReference type="InterPro" id="IPR030470">
    <property type="entry name" value="UbiA_prenylTrfase_CS"/>
</dbReference>
<dbReference type="InterPro" id="IPR044878">
    <property type="entry name" value="UbiA_sf"/>
</dbReference>
<dbReference type="NCBIfam" id="TIGR01473">
    <property type="entry name" value="cyoE_ctaB"/>
    <property type="match status" value="1"/>
</dbReference>
<dbReference type="NCBIfam" id="NF003349">
    <property type="entry name" value="PRK04375.1-2"/>
    <property type="match status" value="1"/>
</dbReference>
<dbReference type="PANTHER" id="PTHR43448:SF7">
    <property type="entry name" value="4-HYDROXYBENZOATE SOLANESYLTRANSFERASE"/>
    <property type="match status" value="1"/>
</dbReference>
<dbReference type="PANTHER" id="PTHR43448">
    <property type="entry name" value="PROTOHEME IX FARNESYLTRANSFERASE, MITOCHONDRIAL"/>
    <property type="match status" value="1"/>
</dbReference>
<dbReference type="Pfam" id="PF01040">
    <property type="entry name" value="UbiA"/>
    <property type="match status" value="1"/>
</dbReference>
<dbReference type="PROSITE" id="PS00943">
    <property type="entry name" value="UBIA"/>
    <property type="match status" value="1"/>
</dbReference>
<evidence type="ECO:0000255" key="1">
    <source>
        <dbReference type="HAMAP-Rule" id="MF_00154"/>
    </source>
</evidence>
<reference key="1">
    <citation type="journal article" date="2007" name="J. Bacteriol.">
        <title>The complete genome sequence of Roseobacter denitrificans reveals a mixotrophic rather than photosynthetic metabolism.</title>
        <authorList>
            <person name="Swingley W.D."/>
            <person name="Sadekar S."/>
            <person name="Mastrian S.D."/>
            <person name="Matthies H.J."/>
            <person name="Hao J."/>
            <person name="Ramos H."/>
            <person name="Acharya C.R."/>
            <person name="Conrad A.L."/>
            <person name="Taylor H.L."/>
            <person name="Dejesa L.C."/>
            <person name="Shah M.K."/>
            <person name="O'Huallachain M.E."/>
            <person name="Lince M.T."/>
            <person name="Blankenship R.E."/>
            <person name="Beatty J.T."/>
            <person name="Touchman J.W."/>
        </authorList>
    </citation>
    <scope>NUCLEOTIDE SEQUENCE [LARGE SCALE GENOMIC DNA]</scope>
    <source>
        <strain>ATCC 33942 / OCh 114</strain>
    </source>
</reference>
<sequence length="314" mass="33965">MADVGYTSSPAAKEYEAQLGDYFALLKPRVMSLVVFTALVGLQAAPVSVHPVIGFASILFVAIGAGASGALNMWWDADIDAVMRRTANRPIPAGRVQPGEALNLGAALSGLSIMMLALTANFLAAGLLAFTIFFYAVIYSMWLKRWTPQNIVIGGAAGAFPPVIGWVIATGSLSIEAWLMFALIFMWTPPHFWALALFMKSDYDDAGVPMLTVTHGRKKTRAHIIAYTVLLAVLAVGTGFSAIGGPVYLAAALVLNALFLKGAIDIWRRDEDTAIADEYRVEKKFFRLSLWYLFAHFGAILLESALRPFGLGGW</sequence>
<keyword id="KW-0997">Cell inner membrane</keyword>
<keyword id="KW-1003">Cell membrane</keyword>
<keyword id="KW-0350">Heme biosynthesis</keyword>
<keyword id="KW-0472">Membrane</keyword>
<keyword id="KW-1185">Reference proteome</keyword>
<keyword id="KW-0808">Transferase</keyword>
<keyword id="KW-0812">Transmembrane</keyword>
<keyword id="KW-1133">Transmembrane helix</keyword>
<proteinExistence type="inferred from homology"/>